<sequence>MPAKEIAFHQPAREAILRGVQTLAEAVAVTLGPKGRNVVIEKSYGAPTITKDGVTVAKEIELESKFENMGAQMVKEVASQTSDKAGDGTTTATVLARSIYEEGLKLVAAGHNPMDLKRGIDRAVEVVVAHLKSLSTPTKGKDDIAQVGTISANGDTTIGNIIAEAMEKVGKEGVITVEEAKGLETTLDVVEGMQFDRGYSSPYFVTNPDRMEAALEDPYVLVTEKKITAMADLVPVLEQVARSGKPLLIIAEEVEGEALATLVVNKLRGTLHVCAVKAPGFGDRRKEMLKDIATLTGGTVVAEELGIKLEQLGLKDLGRAKRITVDKDNTTIVDGEGKKADIEARIKVIRGQIEESTSEYDREKLQERLAKLVGGVAVINVGAATETEMKEKKARVEDALHATRAAVEEGIVPGGGVAYLRSLADLQKLDVGQGDQRFGVQIVVKALEWPARRIAENAGWDGPVVVNKILEGKGAFGFNAATDTFEDLTKAGVIDPTKVSRTALQNAASVASLLLTTEAMVADKPKKKAAAGGGAGAGMGGGMDDMDY</sequence>
<reference key="1">
    <citation type="submission" date="2006-01" db="EMBL/GenBank/DDBJ databases">
        <title>Complete sequence of Anaeromyxobacter dehalogenans 2CP-C.</title>
        <authorList>
            <person name="Copeland A."/>
            <person name="Lucas S."/>
            <person name="Lapidus A."/>
            <person name="Barry K."/>
            <person name="Detter J.C."/>
            <person name="Glavina T."/>
            <person name="Hammon N."/>
            <person name="Israni S."/>
            <person name="Pitluck S."/>
            <person name="Brettin T."/>
            <person name="Bruce D."/>
            <person name="Han C."/>
            <person name="Tapia R."/>
            <person name="Gilna P."/>
            <person name="Kiss H."/>
            <person name="Schmutz J."/>
            <person name="Larimer F."/>
            <person name="Land M."/>
            <person name="Kyrpides N."/>
            <person name="Anderson I."/>
            <person name="Sanford R.A."/>
            <person name="Ritalahti K.M."/>
            <person name="Thomas H.S."/>
            <person name="Kirby J.R."/>
            <person name="Zhulin I.B."/>
            <person name="Loeffler F.E."/>
            <person name="Richardson P."/>
        </authorList>
    </citation>
    <scope>NUCLEOTIDE SEQUENCE [LARGE SCALE GENOMIC DNA]</scope>
    <source>
        <strain>2CP-C</strain>
    </source>
</reference>
<name>CH601_ANADE</name>
<protein>
    <recommendedName>
        <fullName evidence="1">Chaperonin GroEL 1</fullName>
        <ecNumber evidence="1">5.6.1.7</ecNumber>
    </recommendedName>
    <alternativeName>
        <fullName evidence="1">60 kDa chaperonin 1</fullName>
    </alternativeName>
    <alternativeName>
        <fullName evidence="1">Chaperonin-60 1</fullName>
        <shortName evidence="1">Cpn60 1</shortName>
    </alternativeName>
</protein>
<feature type="chain" id="PRO_0000256870" description="Chaperonin GroEL 1">
    <location>
        <begin position="1"/>
        <end position="548"/>
    </location>
</feature>
<feature type="binding site" evidence="1">
    <location>
        <begin position="30"/>
        <end position="33"/>
    </location>
    <ligand>
        <name>ATP</name>
        <dbReference type="ChEBI" id="CHEBI:30616"/>
    </ligand>
</feature>
<feature type="binding site" evidence="1">
    <location>
        <position position="51"/>
    </location>
    <ligand>
        <name>ATP</name>
        <dbReference type="ChEBI" id="CHEBI:30616"/>
    </ligand>
</feature>
<feature type="binding site" evidence="1">
    <location>
        <begin position="87"/>
        <end position="91"/>
    </location>
    <ligand>
        <name>ATP</name>
        <dbReference type="ChEBI" id="CHEBI:30616"/>
    </ligand>
</feature>
<feature type="binding site" evidence="1">
    <location>
        <position position="415"/>
    </location>
    <ligand>
        <name>ATP</name>
        <dbReference type="ChEBI" id="CHEBI:30616"/>
    </ligand>
</feature>
<feature type="binding site" evidence="1">
    <location>
        <begin position="479"/>
        <end position="481"/>
    </location>
    <ligand>
        <name>ATP</name>
        <dbReference type="ChEBI" id="CHEBI:30616"/>
    </ligand>
</feature>
<feature type="binding site" evidence="1">
    <location>
        <position position="495"/>
    </location>
    <ligand>
        <name>ATP</name>
        <dbReference type="ChEBI" id="CHEBI:30616"/>
    </ligand>
</feature>
<organism>
    <name type="scientific">Anaeromyxobacter dehalogenans (strain 2CP-C)</name>
    <dbReference type="NCBI Taxonomy" id="290397"/>
    <lineage>
        <taxon>Bacteria</taxon>
        <taxon>Pseudomonadati</taxon>
        <taxon>Myxococcota</taxon>
        <taxon>Myxococcia</taxon>
        <taxon>Myxococcales</taxon>
        <taxon>Cystobacterineae</taxon>
        <taxon>Anaeromyxobacteraceae</taxon>
        <taxon>Anaeromyxobacter</taxon>
    </lineage>
</organism>
<comment type="function">
    <text evidence="1">Together with its co-chaperonin GroES, plays an essential role in assisting protein folding. The GroEL-GroES system forms a nano-cage that allows encapsulation of the non-native substrate proteins and provides a physical environment optimized to promote and accelerate protein folding.</text>
</comment>
<comment type="catalytic activity">
    <reaction evidence="1">
        <text>ATP + H2O + a folded polypeptide = ADP + phosphate + an unfolded polypeptide.</text>
        <dbReference type="EC" id="5.6.1.7"/>
    </reaction>
</comment>
<comment type="subunit">
    <text evidence="1">Forms a cylinder of 14 subunits composed of two heptameric rings stacked back-to-back. Interacts with the co-chaperonin GroES.</text>
</comment>
<comment type="subcellular location">
    <subcellularLocation>
        <location evidence="1">Cytoplasm</location>
    </subcellularLocation>
</comment>
<comment type="similarity">
    <text evidence="1">Belongs to the chaperonin (HSP60) family.</text>
</comment>
<accession>Q2IKI2</accession>
<dbReference type="EC" id="5.6.1.7" evidence="1"/>
<dbReference type="EMBL" id="CP000251">
    <property type="protein sequence ID" value="ABC82164.1"/>
    <property type="molecule type" value="Genomic_DNA"/>
</dbReference>
<dbReference type="RefSeq" id="WP_011421446.1">
    <property type="nucleotide sequence ID" value="NC_007760.1"/>
</dbReference>
<dbReference type="SMR" id="Q2IKI2"/>
<dbReference type="STRING" id="290397.Adeh_2394"/>
<dbReference type="KEGG" id="ade:Adeh_2394"/>
<dbReference type="eggNOG" id="COG0459">
    <property type="taxonomic scope" value="Bacteria"/>
</dbReference>
<dbReference type="HOGENOM" id="CLU_016503_3_0_7"/>
<dbReference type="OrthoDB" id="9766614at2"/>
<dbReference type="Proteomes" id="UP000001935">
    <property type="component" value="Chromosome"/>
</dbReference>
<dbReference type="GO" id="GO:0005737">
    <property type="term" value="C:cytoplasm"/>
    <property type="evidence" value="ECO:0007669"/>
    <property type="project" value="UniProtKB-SubCell"/>
</dbReference>
<dbReference type="GO" id="GO:0005524">
    <property type="term" value="F:ATP binding"/>
    <property type="evidence" value="ECO:0007669"/>
    <property type="project" value="UniProtKB-UniRule"/>
</dbReference>
<dbReference type="GO" id="GO:0140662">
    <property type="term" value="F:ATP-dependent protein folding chaperone"/>
    <property type="evidence" value="ECO:0007669"/>
    <property type="project" value="InterPro"/>
</dbReference>
<dbReference type="GO" id="GO:0016853">
    <property type="term" value="F:isomerase activity"/>
    <property type="evidence" value="ECO:0007669"/>
    <property type="project" value="UniProtKB-KW"/>
</dbReference>
<dbReference type="GO" id="GO:0051082">
    <property type="term" value="F:unfolded protein binding"/>
    <property type="evidence" value="ECO:0007669"/>
    <property type="project" value="UniProtKB-UniRule"/>
</dbReference>
<dbReference type="GO" id="GO:0042026">
    <property type="term" value="P:protein refolding"/>
    <property type="evidence" value="ECO:0007669"/>
    <property type="project" value="UniProtKB-UniRule"/>
</dbReference>
<dbReference type="CDD" id="cd03344">
    <property type="entry name" value="GroEL"/>
    <property type="match status" value="1"/>
</dbReference>
<dbReference type="FunFam" id="1.10.560.10:FF:000001">
    <property type="entry name" value="60 kDa chaperonin"/>
    <property type="match status" value="1"/>
</dbReference>
<dbReference type="FunFam" id="3.50.7.10:FF:000001">
    <property type="entry name" value="60 kDa chaperonin"/>
    <property type="match status" value="1"/>
</dbReference>
<dbReference type="Gene3D" id="3.50.7.10">
    <property type="entry name" value="GroEL"/>
    <property type="match status" value="1"/>
</dbReference>
<dbReference type="Gene3D" id="1.10.560.10">
    <property type="entry name" value="GroEL-like equatorial domain"/>
    <property type="match status" value="1"/>
</dbReference>
<dbReference type="Gene3D" id="3.30.260.10">
    <property type="entry name" value="TCP-1-like chaperonin intermediate domain"/>
    <property type="match status" value="1"/>
</dbReference>
<dbReference type="HAMAP" id="MF_00600">
    <property type="entry name" value="CH60"/>
    <property type="match status" value="1"/>
</dbReference>
<dbReference type="InterPro" id="IPR018370">
    <property type="entry name" value="Chaperonin_Cpn60_CS"/>
</dbReference>
<dbReference type="InterPro" id="IPR001844">
    <property type="entry name" value="Cpn60/GroEL"/>
</dbReference>
<dbReference type="InterPro" id="IPR002423">
    <property type="entry name" value="Cpn60/GroEL/TCP-1"/>
</dbReference>
<dbReference type="InterPro" id="IPR027409">
    <property type="entry name" value="GroEL-like_apical_dom_sf"/>
</dbReference>
<dbReference type="InterPro" id="IPR027413">
    <property type="entry name" value="GROEL-like_equatorial_sf"/>
</dbReference>
<dbReference type="InterPro" id="IPR027410">
    <property type="entry name" value="TCP-1-like_intermed_sf"/>
</dbReference>
<dbReference type="NCBIfam" id="TIGR02348">
    <property type="entry name" value="GroEL"/>
    <property type="match status" value="1"/>
</dbReference>
<dbReference type="NCBIfam" id="NF000592">
    <property type="entry name" value="PRK00013.1"/>
    <property type="match status" value="1"/>
</dbReference>
<dbReference type="NCBIfam" id="NF009487">
    <property type="entry name" value="PRK12849.1"/>
    <property type="match status" value="1"/>
</dbReference>
<dbReference type="NCBIfam" id="NF009488">
    <property type="entry name" value="PRK12850.1"/>
    <property type="match status" value="1"/>
</dbReference>
<dbReference type="NCBIfam" id="NF009489">
    <property type="entry name" value="PRK12851.1"/>
    <property type="match status" value="1"/>
</dbReference>
<dbReference type="PANTHER" id="PTHR45633">
    <property type="entry name" value="60 KDA HEAT SHOCK PROTEIN, MITOCHONDRIAL"/>
    <property type="match status" value="1"/>
</dbReference>
<dbReference type="Pfam" id="PF00118">
    <property type="entry name" value="Cpn60_TCP1"/>
    <property type="match status" value="1"/>
</dbReference>
<dbReference type="PRINTS" id="PR00298">
    <property type="entry name" value="CHAPERONIN60"/>
</dbReference>
<dbReference type="SUPFAM" id="SSF52029">
    <property type="entry name" value="GroEL apical domain-like"/>
    <property type="match status" value="1"/>
</dbReference>
<dbReference type="SUPFAM" id="SSF48592">
    <property type="entry name" value="GroEL equatorial domain-like"/>
    <property type="match status" value="1"/>
</dbReference>
<dbReference type="SUPFAM" id="SSF54849">
    <property type="entry name" value="GroEL-intermediate domain like"/>
    <property type="match status" value="1"/>
</dbReference>
<dbReference type="PROSITE" id="PS00296">
    <property type="entry name" value="CHAPERONINS_CPN60"/>
    <property type="match status" value="1"/>
</dbReference>
<keyword id="KW-0067">ATP-binding</keyword>
<keyword id="KW-0143">Chaperone</keyword>
<keyword id="KW-0963">Cytoplasm</keyword>
<keyword id="KW-0413">Isomerase</keyword>
<keyword id="KW-0547">Nucleotide-binding</keyword>
<keyword id="KW-1185">Reference proteome</keyword>
<gene>
    <name evidence="1" type="primary">groEL1</name>
    <name evidence="1" type="synonym">groL1</name>
    <name type="ordered locus">Adeh_2394</name>
</gene>
<proteinExistence type="inferred from homology"/>
<evidence type="ECO:0000255" key="1">
    <source>
        <dbReference type="HAMAP-Rule" id="MF_00600"/>
    </source>
</evidence>